<gene>
    <name evidence="1" type="primary">tfb</name>
</gene>
<feature type="chain" id="PRO_0000119324" description="Transcription initiation factor IIB">
    <location>
        <begin position="1"/>
        <end position="339"/>
    </location>
</feature>
<feature type="repeat" description="1">
    <location>
        <begin position="156"/>
        <end position="239"/>
    </location>
</feature>
<feature type="repeat" description="2">
    <location>
        <begin position="250"/>
        <end position="331"/>
    </location>
</feature>
<feature type="zinc finger region" description="TFIIB-type" evidence="2">
    <location>
        <begin position="39"/>
        <end position="70"/>
    </location>
</feature>
<feature type="binding site" evidence="2">
    <location>
        <position position="43"/>
    </location>
    <ligand>
        <name>Zn(2+)</name>
        <dbReference type="ChEBI" id="CHEBI:29105"/>
    </ligand>
</feature>
<feature type="binding site" evidence="2">
    <location>
        <position position="46"/>
    </location>
    <ligand>
        <name>Zn(2+)</name>
        <dbReference type="ChEBI" id="CHEBI:29105"/>
    </ligand>
</feature>
<feature type="binding site" evidence="2">
    <location>
        <position position="62"/>
    </location>
    <ligand>
        <name>Zn(2+)</name>
        <dbReference type="ChEBI" id="CHEBI:29105"/>
    </ligand>
</feature>
<feature type="binding site" evidence="2">
    <location>
        <position position="65"/>
    </location>
    <ligand>
        <name>Zn(2+)</name>
        <dbReference type="ChEBI" id="CHEBI:29105"/>
    </ligand>
</feature>
<organism>
    <name type="scientific">Methanothermococcus thermolithotrophicus</name>
    <name type="common">Methanococcus thermolithotrophicus</name>
    <dbReference type="NCBI Taxonomy" id="2186"/>
    <lineage>
        <taxon>Archaea</taxon>
        <taxon>Methanobacteriati</taxon>
        <taxon>Methanobacteriota</taxon>
        <taxon>Methanomada group</taxon>
        <taxon>Methanococci</taxon>
        <taxon>Methanococcales</taxon>
        <taxon>Methanococcaceae</taxon>
        <taxon>Methanothermococcus</taxon>
    </lineage>
</organism>
<evidence type="ECO:0000255" key="1">
    <source>
        <dbReference type="HAMAP-Rule" id="MF_00383"/>
    </source>
</evidence>
<evidence type="ECO:0000255" key="2">
    <source>
        <dbReference type="PROSITE-ProRule" id="PRU00469"/>
    </source>
</evidence>
<keyword id="KW-0479">Metal-binding</keyword>
<keyword id="KW-0677">Repeat</keyword>
<keyword id="KW-0804">Transcription</keyword>
<keyword id="KW-0805">Transcription regulation</keyword>
<keyword id="KW-0862">Zinc</keyword>
<keyword id="KW-0863">Zinc-finger</keyword>
<accession>Q9P9I7</accession>
<protein>
    <recommendedName>
        <fullName evidence="1">Transcription initiation factor IIB</fullName>
        <shortName evidence="1">TFIIB</shortName>
    </recommendedName>
</protein>
<proteinExistence type="inferred from homology"/>
<comment type="function">
    <text evidence="1">Stabilizes TBP binding to an archaeal box-A promoter. Also responsible for recruiting RNA polymerase II to the pre-initiation complex (DNA-TBP-TFIIB).</text>
</comment>
<comment type="similarity">
    <text evidence="1">Belongs to the TFIIB family.</text>
</comment>
<dbReference type="EMBL" id="AJ271467">
    <property type="protein sequence ID" value="CAB69073.1"/>
    <property type="molecule type" value="Genomic_DNA"/>
</dbReference>
<dbReference type="SMR" id="Q9P9I7"/>
<dbReference type="GO" id="GO:0097550">
    <property type="term" value="C:transcription preinitiation complex"/>
    <property type="evidence" value="ECO:0007669"/>
    <property type="project" value="TreeGrafter"/>
</dbReference>
<dbReference type="GO" id="GO:0003700">
    <property type="term" value="F:DNA-binding transcription factor activity"/>
    <property type="evidence" value="ECO:0007669"/>
    <property type="project" value="UniProtKB-UniRule"/>
</dbReference>
<dbReference type="GO" id="GO:0017025">
    <property type="term" value="F:TBP-class protein binding"/>
    <property type="evidence" value="ECO:0007669"/>
    <property type="project" value="InterPro"/>
</dbReference>
<dbReference type="GO" id="GO:0008270">
    <property type="term" value="F:zinc ion binding"/>
    <property type="evidence" value="ECO:0007669"/>
    <property type="project" value="UniProtKB-UniRule"/>
</dbReference>
<dbReference type="GO" id="GO:0070897">
    <property type="term" value="P:transcription preinitiation complex assembly"/>
    <property type="evidence" value="ECO:0007669"/>
    <property type="project" value="InterPro"/>
</dbReference>
<dbReference type="CDD" id="cd20549">
    <property type="entry name" value="CYCLIN_TFIIB_archaea_like_rpt1"/>
    <property type="match status" value="1"/>
</dbReference>
<dbReference type="CDD" id="cd20550">
    <property type="entry name" value="CYCLIN_TFIIB_archaea_like_rpt2"/>
    <property type="match status" value="1"/>
</dbReference>
<dbReference type="FunFam" id="1.10.472.10:FF:000023">
    <property type="entry name" value="Transcription initiation factor IIB"/>
    <property type="match status" value="1"/>
</dbReference>
<dbReference type="FunFam" id="1.10.472.170:FF:000001">
    <property type="entry name" value="Transcription initiation factor IIB"/>
    <property type="match status" value="1"/>
</dbReference>
<dbReference type="FunFam" id="2.20.25.10:FF:000037">
    <property type="entry name" value="Transcription initiation factor IIB"/>
    <property type="match status" value="1"/>
</dbReference>
<dbReference type="Gene3D" id="1.10.472.170">
    <property type="match status" value="1"/>
</dbReference>
<dbReference type="Gene3D" id="1.10.472.10">
    <property type="entry name" value="Cyclin-like"/>
    <property type="match status" value="1"/>
</dbReference>
<dbReference type="HAMAP" id="MF_00383">
    <property type="entry name" value="TF2B_arch"/>
    <property type="match status" value="1"/>
</dbReference>
<dbReference type="InterPro" id="IPR013763">
    <property type="entry name" value="Cyclin-like_dom"/>
</dbReference>
<dbReference type="InterPro" id="IPR036915">
    <property type="entry name" value="Cyclin-like_sf"/>
</dbReference>
<dbReference type="InterPro" id="IPR000812">
    <property type="entry name" value="TFIIB"/>
</dbReference>
<dbReference type="InterPro" id="IPR023484">
    <property type="entry name" value="TFIIB_arc"/>
</dbReference>
<dbReference type="InterPro" id="IPR023486">
    <property type="entry name" value="TFIIB_CS"/>
</dbReference>
<dbReference type="InterPro" id="IPR013150">
    <property type="entry name" value="TFIIB_cyclin"/>
</dbReference>
<dbReference type="InterPro" id="IPR013137">
    <property type="entry name" value="Znf_TFIIB"/>
</dbReference>
<dbReference type="NCBIfam" id="NF001658">
    <property type="entry name" value="PRK00423.1"/>
    <property type="match status" value="1"/>
</dbReference>
<dbReference type="PANTHER" id="PTHR11618:SF13">
    <property type="entry name" value="TRANSCRIPTION INITIATION FACTOR IIB"/>
    <property type="match status" value="1"/>
</dbReference>
<dbReference type="PANTHER" id="PTHR11618">
    <property type="entry name" value="TRANSCRIPTION INITIATION FACTOR IIB-RELATED"/>
    <property type="match status" value="1"/>
</dbReference>
<dbReference type="Pfam" id="PF00382">
    <property type="entry name" value="TFIIB"/>
    <property type="match status" value="2"/>
</dbReference>
<dbReference type="Pfam" id="PF08271">
    <property type="entry name" value="Zn_Ribbon_TF"/>
    <property type="match status" value="1"/>
</dbReference>
<dbReference type="PRINTS" id="PR00685">
    <property type="entry name" value="TIFACTORIIB"/>
</dbReference>
<dbReference type="SMART" id="SM00385">
    <property type="entry name" value="CYCLIN"/>
    <property type="match status" value="2"/>
</dbReference>
<dbReference type="SUPFAM" id="SSF47954">
    <property type="entry name" value="Cyclin-like"/>
    <property type="match status" value="2"/>
</dbReference>
<dbReference type="SUPFAM" id="SSF57783">
    <property type="entry name" value="Zinc beta-ribbon"/>
    <property type="match status" value="1"/>
</dbReference>
<dbReference type="PROSITE" id="PS00782">
    <property type="entry name" value="TFIIB"/>
    <property type="match status" value="2"/>
</dbReference>
<dbReference type="PROSITE" id="PS51134">
    <property type="entry name" value="ZF_TFIIB"/>
    <property type="match status" value="1"/>
</dbReference>
<reference key="1">
    <citation type="journal article" date="2000" name="J. Biol. Chem.">
        <title>Transcription factor S, a cleavage induction factor of the archaeal RNA polymerase.</title>
        <authorList>
            <person name="Hausner W."/>
            <person name="Lange U."/>
            <person name="Musfeldt M."/>
        </authorList>
    </citation>
    <scope>NUCLEOTIDE SEQUENCE [GENOMIC DNA]</scope>
</reference>
<name>TF2B_METTL</name>
<sequence>MATKPVVKEKKKLENKKEIYKLIEHNDSSNKNVILEKEEELICPMCGSKNIIKDYERAEIVCETCGCVLQQNLFDVGPEWRAFDHEQRVKRSRVGPPMTYTIHDKGLSTVIDWRNKDSYGKDISADKRAQLYRLRKWQRRIRVSDASERNLAFALSELDRIASKLGLPRNVRENAAVLYRGAVEKGLIRGRSIEGVAAAALYAACRRCKVPRTLDEIAEGSRVDRKEIGRTYRFISRELNIRLTPTNPIDYVPRFASELKLPGEVESKAISILQKANEKGLTSGRGPTGVAAAAIYIASVLHGTRRTQREVADVAGVTEVTIRNRYKELTEHLDIDVTL</sequence>